<proteinExistence type="evidence at protein level"/>
<keyword id="KW-0002">3D-structure</keyword>
<keyword id="KW-0210">Decarboxylase</keyword>
<keyword id="KW-0456">Lyase</keyword>
<keyword id="KW-1185">Reference proteome</keyword>
<keyword id="KW-0704">Schiff base</keyword>
<evidence type="ECO:0000255" key="1">
    <source>
        <dbReference type="HAMAP-Rule" id="MF_00597"/>
    </source>
</evidence>
<evidence type="ECO:0000269" key="2">
    <source>
    </source>
</evidence>
<evidence type="ECO:0000303" key="3">
    <source>
    </source>
</evidence>
<evidence type="ECO:0000305" key="4">
    <source>
    </source>
</evidence>
<evidence type="ECO:0007744" key="5">
    <source>
        <dbReference type="PDB" id="3BGT"/>
    </source>
</evidence>
<evidence type="ECO:0007744" key="6">
    <source>
        <dbReference type="PDB" id="3BH3"/>
    </source>
</evidence>
<evidence type="ECO:0007829" key="7">
    <source>
        <dbReference type="PDB" id="3BGT"/>
    </source>
</evidence>
<gene>
    <name evidence="1" type="primary">adc</name>
    <name type="ordered locus">CV_3520</name>
</gene>
<comment type="function">
    <text evidence="1 2">Catalyzes the conversion of acetoacetate to acetone and carbon dioxide.</text>
</comment>
<comment type="catalytic activity">
    <reaction evidence="1 2">
        <text>acetoacetate + H(+) = acetone + CO2</text>
        <dbReference type="Rhea" id="RHEA:19729"/>
        <dbReference type="ChEBI" id="CHEBI:13705"/>
        <dbReference type="ChEBI" id="CHEBI:15347"/>
        <dbReference type="ChEBI" id="CHEBI:15378"/>
        <dbReference type="ChEBI" id="CHEBI:16526"/>
        <dbReference type="EC" id="4.1.1.4"/>
    </reaction>
</comment>
<comment type="biophysicochemical properties">
    <kinetics>
        <KM evidence="2">6 mM for acetoacetate (at pH 6)</KM>
        <KM evidence="2">4 mM for acetoacetate (at pH 5.4)</KM>
        <KM evidence="2">2.6 mM for acetoacetate (at pH 4.8)</KM>
        <text evidence="2">kcat is 350 sec(-1) at pH 6. kcat is 440 sec(-1) at pH 5.4. kcat is 420 sec(-1) at pH 4.8.</text>
    </kinetics>
</comment>
<comment type="subunit">
    <text evidence="2">Homododecamer.</text>
</comment>
<comment type="similarity">
    <text evidence="1">Belongs to the ADC family.</text>
</comment>
<protein>
    <recommendedName>
        <fullName evidence="1 3">Acetoacetate decarboxylase</fullName>
        <shortName evidence="1">AAD</shortName>
        <shortName evidence="3">AADase</shortName>
        <shortName evidence="1">ADC</shortName>
        <ecNumber evidence="1 2">4.1.1.4</ecNumber>
    </recommendedName>
</protein>
<reference key="1">
    <citation type="journal article" date="2003" name="Proc. Natl. Acad. Sci. U.S.A.">
        <title>The complete genome sequence of Chromobacterium violaceum reveals remarkable and exploitable bacterial adaptability.</title>
        <authorList>
            <person name="Vasconcelos A.T.R."/>
            <person name="de Almeida D.F."/>
            <person name="Hungria M."/>
            <person name="Guimaraes C.T."/>
            <person name="Antonio R.V."/>
            <person name="Almeida F.C."/>
            <person name="de Almeida L.G.P."/>
            <person name="de Almeida R."/>
            <person name="Alves-Gomes J.A."/>
            <person name="Andrade E.M."/>
            <person name="Araripe J."/>
            <person name="de Araujo M.F.F."/>
            <person name="Astolfi-Filho S."/>
            <person name="Azevedo V."/>
            <person name="Baptista A.J."/>
            <person name="Bataus L.A.M."/>
            <person name="Batista J.S."/>
            <person name="Belo A."/>
            <person name="van den Berg C."/>
            <person name="Bogo M."/>
            <person name="Bonatto S."/>
            <person name="Bordignon J."/>
            <person name="Brigido M.M."/>
            <person name="Brito C.A."/>
            <person name="Brocchi M."/>
            <person name="Burity H.A."/>
            <person name="Camargo A.A."/>
            <person name="Cardoso D.D.P."/>
            <person name="Carneiro N.P."/>
            <person name="Carraro D.M."/>
            <person name="Carvalho C.M.B."/>
            <person name="Cascardo J.C.M."/>
            <person name="Cavada B.S."/>
            <person name="Chueire L.M.O."/>
            <person name="Creczynski-Pasa T.B."/>
            <person name="Cunha-Junior N.C."/>
            <person name="Fagundes N."/>
            <person name="Falcao C.L."/>
            <person name="Fantinatti F."/>
            <person name="Farias I.P."/>
            <person name="Felipe M.S.S."/>
            <person name="Ferrari L.P."/>
            <person name="Ferro J.A."/>
            <person name="Ferro M.I.T."/>
            <person name="Franco G.R."/>
            <person name="Freitas N.S.A."/>
            <person name="Furlan L.R."/>
            <person name="Gazzinelli R.T."/>
            <person name="Gomes E.A."/>
            <person name="Goncalves P.R."/>
            <person name="Grangeiro T.B."/>
            <person name="Grattapaglia D."/>
            <person name="Grisard E.C."/>
            <person name="Hanna E.S."/>
            <person name="Jardim S.N."/>
            <person name="Laurino J."/>
            <person name="Leoi L.C.T."/>
            <person name="Lima L.F.A."/>
            <person name="Loureiro M.F."/>
            <person name="Lyra M.C.C.P."/>
            <person name="Madeira H.M.F."/>
            <person name="Manfio G.P."/>
            <person name="Maranhao A.Q."/>
            <person name="Martins W.S."/>
            <person name="di Mauro S.M.Z."/>
            <person name="de Medeiros S.R.B."/>
            <person name="Meissner R.V."/>
            <person name="Moreira M.A.M."/>
            <person name="Nascimento F.F."/>
            <person name="Nicolas M.F."/>
            <person name="Oliveira J.G."/>
            <person name="Oliveira S.C."/>
            <person name="Paixao R.F.C."/>
            <person name="Parente J.A."/>
            <person name="Pedrosa F.O."/>
            <person name="Pena S.D.J."/>
            <person name="Pereira J.O."/>
            <person name="Pereira M."/>
            <person name="Pinto L.S.R.C."/>
            <person name="Pinto L.S."/>
            <person name="Porto J.I.R."/>
            <person name="Potrich D.P."/>
            <person name="Ramalho-Neto C.E."/>
            <person name="Reis A.M.M."/>
            <person name="Rigo L.U."/>
            <person name="Rondinelli E."/>
            <person name="Santos E.B.P."/>
            <person name="Santos F.R."/>
            <person name="Schneider M.P.C."/>
            <person name="Seuanez H.N."/>
            <person name="Silva A.M.R."/>
            <person name="da Silva A.L.C."/>
            <person name="Silva D.W."/>
            <person name="Silva R."/>
            <person name="Simoes I.C."/>
            <person name="Simon D."/>
            <person name="Soares C.M.A."/>
            <person name="Soares R.B.A."/>
            <person name="Souza E.M."/>
            <person name="Souza K.R.L."/>
            <person name="Souza R.C."/>
            <person name="Steffens M.B.R."/>
            <person name="Steindel M."/>
            <person name="Teixeira S.R."/>
            <person name="Urmenyi T."/>
            <person name="Vettore A."/>
            <person name="Wassem R."/>
            <person name="Zaha A."/>
            <person name="Simpson A.J.G."/>
        </authorList>
    </citation>
    <scope>NUCLEOTIDE SEQUENCE [LARGE SCALE GENOMIC DNA]</scope>
    <source>
        <strain>ATCC 12472 / DSM 30191 / JCM 1249 / CCUG 213 / NBRC 12614 / NCIMB 9131 / NCTC 9757 / MK</strain>
    </source>
</reference>
<reference evidence="5 6" key="2">
    <citation type="journal article" date="2009" name="Nature">
        <title>The origin of the electrostatic perturbation in acetoacetate decarboxylase.</title>
        <authorList>
            <person name="Ho M.C."/>
            <person name="Menetret J.F."/>
            <person name="Tsuruta H."/>
            <person name="Allen K.N."/>
        </authorList>
    </citation>
    <scope>X-RAY CRYSTALLOGRAPHY (2.10 ANGSTROMS) OF APOENZYME AND IN COMPLEX WITH THE INTERMEDIATE ANALOG 2,4-PENTANEDIONE</scope>
    <scope>FUNCTION</scope>
    <scope>CATALYTIC ACTIVITY</scope>
    <scope>REACTION MECHANISM</scope>
    <scope>BIOPHYSICOCHEMICAL PROPERTIES</scope>
    <scope>SUBUNIT</scope>
    <scope>ACTIVE SITE</scope>
    <scope>MUTAGENESIS OF GLU-62 AND GLU-77</scope>
</reference>
<accession>Q7NSA6</accession>
<sequence length="246" mass="27299">MKQQEVRQRAFAMPLTSPAFPPGPYRFVNREYMIITYRTDPAAIEAVLPEPLQMAEPVVRYEFIRMPDSTGFGDYSESGQVIPVTFRGERGSYTLAMFLDDQPPLAGGRELWGFPKKAGKPRLEVHQDTLVGSLDFGPVRIATGTMGYKYEALDRSALLASLAEPNFLLKIIPHVDGSPRICELVRYHTTDVAIKGAWSAPGSLELHPHALAPVAALPVLEVLSARHFVCDLTLDLGTVVFDYLRQ</sequence>
<dbReference type="EC" id="4.1.1.4" evidence="1 2"/>
<dbReference type="EMBL" id="AE016825">
    <property type="protein sequence ID" value="AAQ61181.1"/>
    <property type="molecule type" value="Genomic_DNA"/>
</dbReference>
<dbReference type="RefSeq" id="WP_011137067.1">
    <property type="nucleotide sequence ID" value="NC_005085.1"/>
</dbReference>
<dbReference type="PDB" id="3BGT">
    <property type="method" value="X-ray"/>
    <property type="resolution" value="2.10 A"/>
    <property type="chains" value="A/B/C/D=1-246"/>
</dbReference>
<dbReference type="PDB" id="3BH3">
    <property type="method" value="X-ray"/>
    <property type="resolution" value="2.10 A"/>
    <property type="chains" value="A/B/C/D=1-246"/>
</dbReference>
<dbReference type="PDBsum" id="3BGT"/>
<dbReference type="PDBsum" id="3BH3"/>
<dbReference type="SMR" id="Q7NSA6"/>
<dbReference type="DIP" id="DIP-59757N"/>
<dbReference type="STRING" id="243365.CV_3520"/>
<dbReference type="KEGG" id="cvi:CV_3520"/>
<dbReference type="eggNOG" id="COG4689">
    <property type="taxonomic scope" value="Bacteria"/>
</dbReference>
<dbReference type="HOGENOM" id="CLU_077089_0_0_4"/>
<dbReference type="OrthoDB" id="1633687at2"/>
<dbReference type="BRENDA" id="4.1.1.4">
    <property type="organism ID" value="1370"/>
</dbReference>
<dbReference type="EvolutionaryTrace" id="Q7NSA6"/>
<dbReference type="PRO" id="PR:Q7NSA6"/>
<dbReference type="Proteomes" id="UP000001424">
    <property type="component" value="Chromosome"/>
</dbReference>
<dbReference type="GO" id="GO:0047602">
    <property type="term" value="F:acetoacetate decarboxylase activity"/>
    <property type="evidence" value="ECO:0007669"/>
    <property type="project" value="UniProtKB-UniRule"/>
</dbReference>
<dbReference type="Gene3D" id="2.40.400.10">
    <property type="entry name" value="Acetoacetate decarboxylase-like"/>
    <property type="match status" value="1"/>
</dbReference>
<dbReference type="HAMAP" id="MF_00597">
    <property type="entry name" value="ADC"/>
    <property type="match status" value="1"/>
</dbReference>
<dbReference type="InterPro" id="IPR010451">
    <property type="entry name" value="Acetoacetate_decarboxylase"/>
</dbReference>
<dbReference type="InterPro" id="IPR023653">
    <property type="entry name" value="Acetoacetate_decarboxylase_bac"/>
</dbReference>
<dbReference type="InterPro" id="IPR023375">
    <property type="entry name" value="ADC_dom_sf"/>
</dbReference>
<dbReference type="NCBIfam" id="NF002614">
    <property type="entry name" value="PRK02265.1"/>
    <property type="match status" value="1"/>
</dbReference>
<dbReference type="Pfam" id="PF06314">
    <property type="entry name" value="ADC"/>
    <property type="match status" value="1"/>
</dbReference>
<dbReference type="SUPFAM" id="SSF160104">
    <property type="entry name" value="Acetoacetate decarboxylase-like"/>
    <property type="match status" value="1"/>
</dbReference>
<name>ADC_CHRVO</name>
<feature type="chain" id="PRO_0000207104" description="Acetoacetate decarboxylase">
    <location>
        <begin position="1"/>
        <end position="246"/>
    </location>
</feature>
<feature type="active site" description="Schiff-base intermediate with acetoacetate" evidence="1 2">
    <location>
        <position position="116"/>
    </location>
</feature>
<feature type="site" description="Important for activity" evidence="4">
    <location>
        <position position="117"/>
    </location>
</feature>
<feature type="mutagenesis site" description="20-fold decrease in kcat." evidence="2">
    <original>E</original>
    <variation>Q</variation>
    <location>
        <position position="62"/>
    </location>
</feature>
<feature type="mutagenesis site" description="250-fold decrease in kcat." evidence="2">
    <original>E</original>
    <variation>Q</variation>
    <location>
        <position position="77"/>
    </location>
</feature>
<feature type="helix" evidence="7">
    <location>
        <begin position="3"/>
        <end position="9"/>
    </location>
</feature>
<feature type="strand" evidence="7">
    <location>
        <begin position="11"/>
        <end position="14"/>
    </location>
</feature>
<feature type="strand" evidence="7">
    <location>
        <begin position="25"/>
        <end position="38"/>
    </location>
</feature>
<feature type="helix" evidence="7">
    <location>
        <begin position="41"/>
        <end position="45"/>
    </location>
</feature>
<feature type="strand" evidence="7">
    <location>
        <begin position="52"/>
        <end position="54"/>
    </location>
</feature>
<feature type="strand" evidence="7">
    <location>
        <begin position="56"/>
        <end position="69"/>
    </location>
</feature>
<feature type="turn" evidence="7">
    <location>
        <begin position="70"/>
        <end position="72"/>
    </location>
</feature>
<feature type="strand" evidence="7">
    <location>
        <begin position="73"/>
        <end position="86"/>
    </location>
</feature>
<feature type="strand" evidence="7">
    <location>
        <begin position="89"/>
        <end position="100"/>
    </location>
</feature>
<feature type="helix" evidence="7">
    <location>
        <begin position="102"/>
        <end position="110"/>
    </location>
</feature>
<feature type="strand" evidence="7">
    <location>
        <begin position="116"/>
        <end position="118"/>
    </location>
</feature>
<feature type="strand" evidence="7">
    <location>
        <begin position="120"/>
        <end position="126"/>
    </location>
</feature>
<feature type="strand" evidence="7">
    <location>
        <begin position="129"/>
        <end position="136"/>
    </location>
</feature>
<feature type="strand" evidence="7">
    <location>
        <begin position="139"/>
        <end position="149"/>
    </location>
</feature>
<feature type="helix" evidence="7">
    <location>
        <begin position="155"/>
        <end position="163"/>
    </location>
</feature>
<feature type="strand" evidence="7">
    <location>
        <begin position="166"/>
        <end position="173"/>
    </location>
</feature>
<feature type="strand" evidence="7">
    <location>
        <begin position="177"/>
        <end position="187"/>
    </location>
</feature>
<feature type="strand" evidence="7">
    <location>
        <begin position="189"/>
        <end position="199"/>
    </location>
</feature>
<feature type="strand" evidence="7">
    <location>
        <begin position="202"/>
        <end position="206"/>
    </location>
</feature>
<feature type="helix" evidence="7">
    <location>
        <begin position="214"/>
        <end position="216"/>
    </location>
</feature>
<feature type="strand" evidence="7">
    <location>
        <begin position="220"/>
        <end position="234"/>
    </location>
</feature>
<feature type="strand" evidence="7">
    <location>
        <begin position="238"/>
        <end position="242"/>
    </location>
</feature>
<organism>
    <name type="scientific">Chromobacterium violaceum (strain ATCC 12472 / DSM 30191 / JCM 1249 / CCUG 213 / NBRC 12614 / NCIMB 9131 / NCTC 9757 / MK)</name>
    <dbReference type="NCBI Taxonomy" id="243365"/>
    <lineage>
        <taxon>Bacteria</taxon>
        <taxon>Pseudomonadati</taxon>
        <taxon>Pseudomonadota</taxon>
        <taxon>Betaproteobacteria</taxon>
        <taxon>Neisseriales</taxon>
        <taxon>Chromobacteriaceae</taxon>
        <taxon>Chromobacterium</taxon>
    </lineage>
</organism>